<sequence>MGNEFDKILKIIQKDIPLVKEPFSVLAQEVGIEEGKLLKTIEKLVEDGIVRHIAPIYDSRLLGYDSALIAFKVDRQKLEEVANFVNACPGVSHNYERTHDFNLWFTLAVPPEISELEDVVRLMAERERVKDYLVLRVVRLFKIGVKLDYESPAEKESVDTKVYTYTPLTEEEKRIVSITQGSFPLVERPFLEYAKRLRMSEEELLEKLSALKERGVLRRISAVLYHRRAGYVANAMSVWEVPEDAIEEVGRYIAGFKGVSHCYQRTTSEKFRYNLFAMMHGKGQEEIKLLAETISREKALSKYALLFSTREFKKVRIKYFSEEFERWFKELISA</sequence>
<dbReference type="EC" id="4.1.1.111" evidence="1"/>
<dbReference type="EMBL" id="AP011112">
    <property type="protein sequence ID" value="BAI68676.1"/>
    <property type="molecule type" value="Genomic_DNA"/>
</dbReference>
<dbReference type="RefSeq" id="WP_012962859.1">
    <property type="nucleotide sequence ID" value="NC_013799.1"/>
</dbReference>
<dbReference type="PDB" id="4CH7">
    <property type="method" value="X-ray"/>
    <property type="resolution" value="2.00 A"/>
    <property type="chains" value="A=1-334"/>
</dbReference>
<dbReference type="PDB" id="4CZC">
    <property type="method" value="X-ray"/>
    <property type="resolution" value="2.90 A"/>
    <property type="chains" value="A=1-334"/>
</dbReference>
<dbReference type="PDBsum" id="4CH7"/>
<dbReference type="PDBsum" id="4CZC"/>
<dbReference type="SMR" id="D3DFS4"/>
<dbReference type="STRING" id="608538.HTH_0209"/>
<dbReference type="KEGG" id="hte:Hydth_0208"/>
<dbReference type="KEGG" id="hth:HTH_0209"/>
<dbReference type="PATRIC" id="fig|608538.5.peg.209"/>
<dbReference type="eggNOG" id="COG1522">
    <property type="taxonomic scope" value="Bacteria"/>
</dbReference>
<dbReference type="OrthoDB" id="9806536at2"/>
<dbReference type="BRENDA" id="4.1.1.111">
    <property type="organism ID" value="2722"/>
</dbReference>
<dbReference type="EvolutionaryTrace" id="D3DFS4"/>
<dbReference type="Proteomes" id="UP000002574">
    <property type="component" value="Chromosome"/>
</dbReference>
<dbReference type="GO" id="GO:0016829">
    <property type="term" value="F:lyase activity"/>
    <property type="evidence" value="ECO:0007669"/>
    <property type="project" value="UniProtKB-KW"/>
</dbReference>
<dbReference type="Gene3D" id="3.30.70.3460">
    <property type="match status" value="2"/>
</dbReference>
<dbReference type="Gene3D" id="1.10.10.10">
    <property type="entry name" value="Winged helix-like DNA-binding domain superfamily/Winged helix DNA-binding domain"/>
    <property type="match status" value="1"/>
</dbReference>
<dbReference type="InterPro" id="IPR040523">
    <property type="entry name" value="AsnC_trans_reg2"/>
</dbReference>
<dbReference type="InterPro" id="IPR050684">
    <property type="entry name" value="HTH-Siroheme_Decarb"/>
</dbReference>
<dbReference type="InterPro" id="IPR053953">
    <property type="entry name" value="NirdL-like_HTH"/>
</dbReference>
<dbReference type="InterPro" id="IPR019888">
    <property type="entry name" value="Tscrpt_reg_AsnC-like"/>
</dbReference>
<dbReference type="InterPro" id="IPR036388">
    <property type="entry name" value="WH-like_DNA-bd_sf"/>
</dbReference>
<dbReference type="PANTHER" id="PTHR43413:SF1">
    <property type="entry name" value="SIROHEME DECARBOXYLASE NIRL SUBUNIT"/>
    <property type="match status" value="1"/>
</dbReference>
<dbReference type="PANTHER" id="PTHR43413">
    <property type="entry name" value="TRANSCRIPTIONAL REGULATOR, ASNC FAMILY"/>
    <property type="match status" value="1"/>
</dbReference>
<dbReference type="Pfam" id="PF17805">
    <property type="entry name" value="AsnC_trans_reg2"/>
    <property type="match status" value="2"/>
</dbReference>
<dbReference type="Pfam" id="PF22451">
    <property type="entry name" value="NirdL-like_HTH"/>
    <property type="match status" value="2"/>
</dbReference>
<dbReference type="SMART" id="SM00344">
    <property type="entry name" value="HTH_ASNC"/>
    <property type="match status" value="1"/>
</dbReference>
<proteinExistence type="evidence at protein level"/>
<feature type="chain" id="PRO_0000450514" description="Siroheme decarboxylase">
    <location>
        <begin position="1"/>
        <end position="334"/>
    </location>
</feature>
<feature type="active site" evidence="4">
    <location>
        <position position="93"/>
    </location>
</feature>
<feature type="mutagenesis site" description="Loss of activity. Does not alter binding of the substrate analog Fe-URO III." evidence="1">
    <original>H</original>
    <variation>A</variation>
    <variation>S</variation>
    <location>
        <position position="93"/>
    </location>
</feature>
<feature type="mutagenesis site" description="Almost loss of activity. Does not alter binding of the substrate analog Fe-URO III.">
    <original>H</original>
    <variation>Q</variation>
    <location>
        <position position="93"/>
    </location>
</feature>
<feature type="mutagenesis site" description="Does not affect didecarboxysiroheme production. Shows a reduced ability to bind the substrate analog Fe-URO III.">
    <original>Y</original>
    <variation>L</variation>
    <location>
        <position position="95"/>
    </location>
</feature>
<feature type="mutagenesis site" description="Does not affect didecarboxysiroheme production. Shows a reduced ability to bind the substrate analog Fe-URO III.">
    <original>R</original>
    <variation>A</variation>
    <location>
        <position position="218"/>
    </location>
</feature>
<feature type="mutagenesis site" description="Does not affect didecarboxysiroheme production. Does not alter binding of the substrate analog Fe-URO III.">
    <original>R</original>
    <variation>K</variation>
    <location>
        <position position="218"/>
    </location>
</feature>
<feature type="mutagenesis site" description="Does not affect didecarboxysiroheme production. Shows a reduced ability to bind the substrate analog Fe-URO III.">
    <original>R</original>
    <variation>Q</variation>
    <location>
        <position position="219"/>
    </location>
</feature>
<feature type="mutagenesis site" description="Does not affect didecarboxysiroheme production. Cannot bind the substrate analog Fe-URO III.">
    <original>H</original>
    <variation>Q</variation>
    <location>
        <position position="226"/>
    </location>
</feature>
<feature type="mutagenesis site" description="Loss of activity. Abolishes binding of the substrate analog Fe-URO III." evidence="1">
    <original>H</original>
    <variation>A</variation>
    <variation>S</variation>
    <location>
        <position position="261"/>
    </location>
</feature>
<feature type="mutagenesis site" description="Does not affect didecarboxysiroheme production. Shows a reduced ability to bind the substrate analog Fe-URO III.">
    <original>Y</original>
    <variation>F</variation>
    <location>
        <position position="263"/>
    </location>
</feature>
<feature type="helix" evidence="8">
    <location>
        <begin position="4"/>
        <end position="11"/>
    </location>
</feature>
<feature type="strand" evidence="9">
    <location>
        <begin position="18"/>
        <end position="20"/>
    </location>
</feature>
<feature type="helix" evidence="8">
    <location>
        <begin position="22"/>
        <end position="30"/>
    </location>
</feature>
<feature type="helix" evidence="8">
    <location>
        <begin position="34"/>
        <end position="46"/>
    </location>
</feature>
<feature type="strand" evidence="8">
    <location>
        <begin position="52"/>
        <end position="57"/>
    </location>
</feature>
<feature type="helix" evidence="8">
    <location>
        <begin position="60"/>
        <end position="62"/>
    </location>
</feature>
<feature type="strand" evidence="8">
    <location>
        <begin position="65"/>
        <end position="71"/>
    </location>
</feature>
<feature type="helix" evidence="8">
    <location>
        <begin position="75"/>
        <end position="87"/>
    </location>
</feature>
<feature type="strand" evidence="8">
    <location>
        <begin position="91"/>
        <end position="101"/>
    </location>
</feature>
<feature type="strand" evidence="8">
    <location>
        <begin position="103"/>
        <end position="109"/>
    </location>
</feature>
<feature type="turn" evidence="8">
    <location>
        <begin position="111"/>
        <end position="113"/>
    </location>
</feature>
<feature type="helix" evidence="8">
    <location>
        <begin position="116"/>
        <end position="126"/>
    </location>
</feature>
<feature type="strand" evidence="8">
    <location>
        <begin position="132"/>
        <end position="135"/>
    </location>
</feature>
<feature type="helix" evidence="8">
    <location>
        <begin position="170"/>
        <end position="179"/>
    </location>
</feature>
<feature type="strand" evidence="8">
    <location>
        <begin position="186"/>
        <end position="188"/>
    </location>
</feature>
<feature type="helix" evidence="8">
    <location>
        <begin position="191"/>
        <end position="196"/>
    </location>
</feature>
<feature type="helix" evidence="8">
    <location>
        <begin position="201"/>
        <end position="213"/>
    </location>
</feature>
<feature type="strand" evidence="8">
    <location>
        <begin position="216"/>
        <end position="223"/>
    </location>
</feature>
<feature type="strand" evidence="8">
    <location>
        <begin position="233"/>
        <end position="239"/>
    </location>
</feature>
<feature type="turn" evidence="8">
    <location>
        <begin position="243"/>
        <end position="245"/>
    </location>
</feature>
<feature type="helix" evidence="8">
    <location>
        <begin position="246"/>
        <end position="254"/>
    </location>
</feature>
<feature type="strand" evidence="8">
    <location>
        <begin position="259"/>
        <end position="264"/>
    </location>
</feature>
<feature type="strand" evidence="8">
    <location>
        <begin position="275"/>
        <end position="283"/>
    </location>
</feature>
<feature type="helix" evidence="8">
    <location>
        <begin position="284"/>
        <end position="297"/>
    </location>
</feature>
<feature type="strand" evidence="8">
    <location>
        <begin position="303"/>
        <end position="314"/>
    </location>
</feature>
<feature type="helix" evidence="8">
    <location>
        <begin position="323"/>
        <end position="334"/>
    </location>
</feature>
<protein>
    <recommendedName>
        <fullName evidence="2">Siroheme decarboxylase</fullName>
        <ecNumber evidence="1">4.1.1.111</ecNumber>
    </recommendedName>
</protein>
<keyword id="KW-0002">3D-structure</keyword>
<keyword id="KW-0456">Lyase</keyword>
<keyword id="KW-1185">Reference proteome</keyword>
<name>NIRDL_HYDTT</name>
<reference key="1">
    <citation type="journal article" date="2010" name="J. Bacteriol.">
        <title>Complete genome sequence of the thermophilic, obligately chemolithoautotrophic hydrogen-oxidizing bacterium Hydrogenobacter thermophilus TK-6.</title>
        <authorList>
            <person name="Arai H."/>
            <person name="Kanbe H."/>
            <person name="Ishii M."/>
            <person name="Igarashi Y."/>
        </authorList>
    </citation>
    <scope>NUCLEOTIDE SEQUENCE [LARGE SCALE GENOMIC DNA]</scope>
    <source>
        <strain>DSM 6534 / IAM 12695 / TK-6</strain>
    </source>
</reference>
<reference evidence="6 7" key="2">
    <citation type="journal article" date="2014" name="J. Mol. Biol.">
        <title>The crystal structure of siroheme decarboxylase in complex with iron-uroporphyrin III reveals two essential histidine residues.</title>
        <authorList>
            <person name="Haufschildt K."/>
            <person name="Schmelz S."/>
            <person name="Kriegler T.M."/>
            <person name="Neumann A."/>
            <person name="Streif J."/>
            <person name="Arai H."/>
            <person name="Heinz D.W."/>
            <person name="Layer G."/>
        </authorList>
    </citation>
    <scope>X-RAY CRYSTALLOGRAPHY (2.00 ANGSTROMS) OF APOENZYME AND IN COMPLEX WITH SUBSTRATE ANALOG</scope>
    <scope>FUNCTION</scope>
    <scope>CATALYTIC ACTIVITY</scope>
    <scope>PATHWAY</scope>
    <scope>MUTAGENESIS OF HIS-93; TYR-95; ARG-218; ARG-219; HIS-226; HIS-261 AND TYR-263</scope>
</reference>
<gene>
    <name evidence="2" type="primary">nirDL</name>
    <name evidence="5" type="ordered locus">HTH_0209</name>
</gene>
<comment type="function">
    <text evidence="1">Involved in heme d1 biosynthesis. Catalyzes the decarboxylation of siroheme into didecarboxysiroheme. Siroheme is probably decarboxylated to monodecarboxysiroheme, which is in turn decarboxylated to didecarboxysiroheme.</text>
</comment>
<comment type="catalytic activity">
    <reaction evidence="1">
        <text>siroheme + 2 H(+) = 12,18-didecarboxysiroheme + 2 CO2</text>
        <dbReference type="Rhea" id="RHEA:19093"/>
        <dbReference type="ChEBI" id="CHEBI:15378"/>
        <dbReference type="ChEBI" id="CHEBI:16526"/>
        <dbReference type="ChEBI" id="CHEBI:60052"/>
        <dbReference type="ChEBI" id="CHEBI:140497"/>
        <dbReference type="EC" id="4.1.1.111"/>
    </reaction>
</comment>
<comment type="pathway">
    <text evidence="4">Porphyrin-containing compound metabolism.</text>
</comment>
<comment type="miscellaneous">
    <text evidence="4">H.thermophilus possesses the fused nirDL gene but lacks the genes encoding NirG and NirH.</text>
</comment>
<comment type="similarity">
    <text evidence="3">Belongs to the Ahb/Nir family.</text>
</comment>
<organism>
    <name type="scientific">Hydrogenobacter thermophilus (strain DSM 6534 / IAM 12695 / TK-6)</name>
    <dbReference type="NCBI Taxonomy" id="608538"/>
    <lineage>
        <taxon>Bacteria</taxon>
        <taxon>Pseudomonadati</taxon>
        <taxon>Aquificota</taxon>
        <taxon>Aquificia</taxon>
        <taxon>Aquificales</taxon>
        <taxon>Aquificaceae</taxon>
        <taxon>Hydrogenobacter</taxon>
    </lineage>
</organism>
<accession>D3DFS4</accession>
<evidence type="ECO:0000269" key="1">
    <source>
    </source>
</evidence>
<evidence type="ECO:0000303" key="2">
    <source>
    </source>
</evidence>
<evidence type="ECO:0000305" key="3"/>
<evidence type="ECO:0000305" key="4">
    <source>
    </source>
</evidence>
<evidence type="ECO:0000312" key="5">
    <source>
        <dbReference type="EMBL" id="BAI68676.1"/>
    </source>
</evidence>
<evidence type="ECO:0007744" key="6">
    <source>
        <dbReference type="PDB" id="4CH7"/>
    </source>
</evidence>
<evidence type="ECO:0007744" key="7">
    <source>
        <dbReference type="PDB" id="4CZC"/>
    </source>
</evidence>
<evidence type="ECO:0007829" key="8">
    <source>
        <dbReference type="PDB" id="4CH7"/>
    </source>
</evidence>
<evidence type="ECO:0007829" key="9">
    <source>
        <dbReference type="PDB" id="4CZC"/>
    </source>
</evidence>